<proteinExistence type="evidence at protein level"/>
<accession>O32077</accession>
<dbReference type="EMBL" id="AL009126">
    <property type="protein sequence ID" value="CAB15080.1"/>
    <property type="molecule type" value="Genomic_DNA"/>
</dbReference>
<dbReference type="PIR" id="H70005">
    <property type="entry name" value="H70005"/>
</dbReference>
<dbReference type="RefSeq" id="WP_003243808.1">
    <property type="nucleotide sequence ID" value="NZ_OZ025638.1"/>
</dbReference>
<dbReference type="PDB" id="2K14">
    <property type="method" value="NMR"/>
    <property type="chains" value="A=97-174"/>
</dbReference>
<dbReference type="PDBsum" id="2K14"/>
<dbReference type="BMRB" id="O32077"/>
<dbReference type="SMR" id="O32077"/>
<dbReference type="FunCoup" id="O32077">
    <property type="interactions" value="3"/>
</dbReference>
<dbReference type="STRING" id="224308.BSU31020"/>
<dbReference type="PaxDb" id="224308-BSU31020"/>
<dbReference type="EnsemblBacteria" id="CAB15080">
    <property type="protein sequence ID" value="CAB15080"/>
    <property type="gene ID" value="BSU_31020"/>
</dbReference>
<dbReference type="GeneID" id="937144"/>
<dbReference type="KEGG" id="bsu:BSU31020"/>
<dbReference type="PATRIC" id="fig|224308.179.peg.3362"/>
<dbReference type="eggNOG" id="COG1585">
    <property type="taxonomic scope" value="Bacteria"/>
</dbReference>
<dbReference type="InParanoid" id="O32077"/>
<dbReference type="OrthoDB" id="1683445at2"/>
<dbReference type="BioCyc" id="BSUB:BSU31020-MONOMER"/>
<dbReference type="EvolutionaryTrace" id="O32077"/>
<dbReference type="Proteomes" id="UP000001570">
    <property type="component" value="Chromosome"/>
</dbReference>
<dbReference type="GO" id="GO:0045121">
    <property type="term" value="C:membrane raft"/>
    <property type="evidence" value="ECO:0007669"/>
    <property type="project" value="UniProtKB-SubCell"/>
</dbReference>
<dbReference type="GO" id="GO:0005886">
    <property type="term" value="C:plasma membrane"/>
    <property type="evidence" value="ECO:0007669"/>
    <property type="project" value="UniProtKB-SubCell"/>
</dbReference>
<dbReference type="Gene3D" id="2.40.50.140">
    <property type="entry name" value="Nucleic acid-binding proteins"/>
    <property type="match status" value="1"/>
</dbReference>
<dbReference type="InterPro" id="IPR012340">
    <property type="entry name" value="NA-bd_OB-fold"/>
</dbReference>
<keyword id="KW-0002">3D-structure</keyword>
<keyword id="KW-1003">Cell membrane</keyword>
<keyword id="KW-0472">Membrane</keyword>
<keyword id="KW-1185">Reference proteome</keyword>
<keyword id="KW-0812">Transmembrane</keyword>
<keyword id="KW-1133">Transmembrane helix</keyword>
<gene>
    <name evidence="6" type="primary">nfeD2</name>
    <name type="synonym">yuaF</name>
    <name type="ordered locus">BSU31020</name>
</gene>
<comment type="function">
    <text evidence="3">Plays a role in assembly of FloT membrane rafts, probably recruited to rafts by FloT.</text>
</comment>
<comment type="subcellular location">
    <subcellularLocation>
        <location evidence="5 8 9">Cell membrane</location>
        <topology evidence="1">Multi-pass membrane protein</topology>
    </subcellularLocation>
    <subcellularLocation>
        <location evidence="3 5 9">Membrane raft</location>
        <topology evidence="1">Multi-pass membrane protein</topology>
    </subcellularLocation>
    <text evidence="3 4 5">Found in discrete, highly mobile foci, often colocalizes with FloT (PubMed:22753055, PubMed:24222488). Localization in membrane rafts requires floT (PubMed:22753055). Another study also shows colocalization with FloT; membrane assemblies of NfeD2 are slightly larger than FloT membrane assemblies (PubMed:27362352).</text>
</comment>
<comment type="induction">
    <text evidence="2">Expression is sigma W-dependent. Up-regulated by alkali shock and by infection with phage SPP1.</text>
</comment>
<comment type="disruption phenotype">
    <text evidence="3 5">Alters assembly of FloT membrane rafts; more diffuse rafts are seen. Double floA-nfeD2 deletion mutants are wild-type (PubMed:22753055). No visible effect on FloT membrane assemblies (PubMed:27362352).</text>
</comment>
<comment type="similarity">
    <text evidence="7">Belongs to the NfeD family.</text>
</comment>
<reference key="1">
    <citation type="journal article" date="1997" name="Nature">
        <title>The complete genome sequence of the Gram-positive bacterium Bacillus subtilis.</title>
        <authorList>
            <person name="Kunst F."/>
            <person name="Ogasawara N."/>
            <person name="Moszer I."/>
            <person name="Albertini A.M."/>
            <person name="Alloni G."/>
            <person name="Azevedo V."/>
            <person name="Bertero M.G."/>
            <person name="Bessieres P."/>
            <person name="Bolotin A."/>
            <person name="Borchert S."/>
            <person name="Borriss R."/>
            <person name="Boursier L."/>
            <person name="Brans A."/>
            <person name="Braun M."/>
            <person name="Brignell S.C."/>
            <person name="Bron S."/>
            <person name="Brouillet S."/>
            <person name="Bruschi C.V."/>
            <person name="Caldwell B."/>
            <person name="Capuano V."/>
            <person name="Carter N.M."/>
            <person name="Choi S.-K."/>
            <person name="Codani J.-J."/>
            <person name="Connerton I.F."/>
            <person name="Cummings N.J."/>
            <person name="Daniel R.A."/>
            <person name="Denizot F."/>
            <person name="Devine K.M."/>
            <person name="Duesterhoeft A."/>
            <person name="Ehrlich S.D."/>
            <person name="Emmerson P.T."/>
            <person name="Entian K.-D."/>
            <person name="Errington J."/>
            <person name="Fabret C."/>
            <person name="Ferrari E."/>
            <person name="Foulger D."/>
            <person name="Fritz C."/>
            <person name="Fujita M."/>
            <person name="Fujita Y."/>
            <person name="Fuma S."/>
            <person name="Galizzi A."/>
            <person name="Galleron N."/>
            <person name="Ghim S.-Y."/>
            <person name="Glaser P."/>
            <person name="Goffeau A."/>
            <person name="Golightly E.J."/>
            <person name="Grandi G."/>
            <person name="Guiseppi G."/>
            <person name="Guy B.J."/>
            <person name="Haga K."/>
            <person name="Haiech J."/>
            <person name="Harwood C.R."/>
            <person name="Henaut A."/>
            <person name="Hilbert H."/>
            <person name="Holsappel S."/>
            <person name="Hosono S."/>
            <person name="Hullo M.-F."/>
            <person name="Itaya M."/>
            <person name="Jones L.-M."/>
            <person name="Joris B."/>
            <person name="Karamata D."/>
            <person name="Kasahara Y."/>
            <person name="Klaerr-Blanchard M."/>
            <person name="Klein C."/>
            <person name="Kobayashi Y."/>
            <person name="Koetter P."/>
            <person name="Koningstein G."/>
            <person name="Krogh S."/>
            <person name="Kumano M."/>
            <person name="Kurita K."/>
            <person name="Lapidus A."/>
            <person name="Lardinois S."/>
            <person name="Lauber J."/>
            <person name="Lazarevic V."/>
            <person name="Lee S.-M."/>
            <person name="Levine A."/>
            <person name="Liu H."/>
            <person name="Masuda S."/>
            <person name="Mauel C."/>
            <person name="Medigue C."/>
            <person name="Medina N."/>
            <person name="Mellado R.P."/>
            <person name="Mizuno M."/>
            <person name="Moestl D."/>
            <person name="Nakai S."/>
            <person name="Noback M."/>
            <person name="Noone D."/>
            <person name="O'Reilly M."/>
            <person name="Ogawa K."/>
            <person name="Ogiwara A."/>
            <person name="Oudega B."/>
            <person name="Park S.-H."/>
            <person name="Parro V."/>
            <person name="Pohl T.M."/>
            <person name="Portetelle D."/>
            <person name="Porwollik S."/>
            <person name="Prescott A.M."/>
            <person name="Presecan E."/>
            <person name="Pujic P."/>
            <person name="Purnelle B."/>
            <person name="Rapoport G."/>
            <person name="Rey M."/>
            <person name="Reynolds S."/>
            <person name="Rieger M."/>
            <person name="Rivolta C."/>
            <person name="Rocha E."/>
            <person name="Roche B."/>
            <person name="Rose M."/>
            <person name="Sadaie Y."/>
            <person name="Sato T."/>
            <person name="Scanlan E."/>
            <person name="Schleich S."/>
            <person name="Schroeter R."/>
            <person name="Scoffone F."/>
            <person name="Sekiguchi J."/>
            <person name="Sekowska A."/>
            <person name="Seror S.J."/>
            <person name="Serror P."/>
            <person name="Shin B.-S."/>
            <person name="Soldo B."/>
            <person name="Sorokin A."/>
            <person name="Tacconi E."/>
            <person name="Takagi T."/>
            <person name="Takahashi H."/>
            <person name="Takemaru K."/>
            <person name="Takeuchi M."/>
            <person name="Tamakoshi A."/>
            <person name="Tanaka T."/>
            <person name="Terpstra P."/>
            <person name="Tognoni A."/>
            <person name="Tosato V."/>
            <person name="Uchiyama S."/>
            <person name="Vandenbol M."/>
            <person name="Vannier F."/>
            <person name="Vassarotti A."/>
            <person name="Viari A."/>
            <person name="Wambutt R."/>
            <person name="Wedler E."/>
            <person name="Wedler H."/>
            <person name="Weitzenegger T."/>
            <person name="Winters P."/>
            <person name="Wipat A."/>
            <person name="Yamamoto H."/>
            <person name="Yamane K."/>
            <person name="Yasumoto K."/>
            <person name="Yata K."/>
            <person name="Yoshida K."/>
            <person name="Yoshikawa H.-F."/>
            <person name="Zumstein E."/>
            <person name="Yoshikawa H."/>
            <person name="Danchin A."/>
        </authorList>
    </citation>
    <scope>NUCLEOTIDE SEQUENCE [LARGE SCALE GENOMIC DNA]</scope>
    <source>
        <strain>168</strain>
    </source>
</reference>
<reference key="2">
    <citation type="journal article" date="2001" name="Mol. Microbiol.">
        <title>Alkaline shock induces the Bacillus subtilis sigma(W) regulon.</title>
        <authorList>
            <person name="Wiegert T."/>
            <person name="Homuth G."/>
            <person name="Versteeg S."/>
            <person name="Schumann W."/>
        </authorList>
    </citation>
    <scope>INDUCTION</scope>
    <source>
        <strain>168</strain>
    </source>
</reference>
<reference key="3">
    <citation type="journal article" date="2012" name="J. Bacteriol.">
        <title>Synthetic motility and cell shape defects associated with deletions of flotillin/reggie paralogs in Bacillus subtilis and interplay of these proteins with NfeD proteins.</title>
        <authorList>
            <person name="Dempwolff F."/>
            <person name="Moeller H.M."/>
            <person name="Graumann P.L."/>
        </authorList>
    </citation>
    <scope>FUNCTION</scope>
    <scope>SUBCELLULAR LOCATION</scope>
    <scope>DISRUPTION PHENOTYPE</scope>
    <source>
        <strain>168 / PY79</strain>
    </source>
</reference>
<reference key="4">
    <citation type="journal article" date="2013" name="MBio">
        <title>Overproduction of flotillin influences cell differentiation and shape in Bacillus subtilis.</title>
        <authorList>
            <person name="Mielich-Suess B."/>
            <person name="Schneider J."/>
            <person name="Lopez D."/>
        </authorList>
    </citation>
    <scope>SUBCELLULAR LOCATION</scope>
    <source>
        <strain>168 / PY79</strain>
    </source>
</reference>
<reference key="5">
    <citation type="journal article" date="2016" name="PLoS Genet.">
        <title>Super Resolution Fluorescence Microscopy and Tracking of Bacterial Flotillin (Reggie) Paralogs Provide Evidence for Defined-Sized Protein Microdomains within the Bacterial Membrane but Absence of Clusters Containing Detergent-Resistant Proteins.</title>
        <authorList>
            <person name="Dempwolff F."/>
            <person name="Schmidt F.K."/>
            <person name="Hervas A.B."/>
            <person name="Stroh A."/>
            <person name="Roesch T.C."/>
            <person name="Riese C.N."/>
            <person name="Dersch S."/>
            <person name="Heimerl T."/>
            <person name="Lucena D."/>
            <person name="Huelsbusch N."/>
            <person name="Stuermer C.A."/>
            <person name="Takeshita N."/>
            <person name="Fischer R."/>
            <person name="Eckhardt B."/>
            <person name="Graumann P.L."/>
        </authorList>
    </citation>
    <scope>COLOCALIZATION WITH FLOT</scope>
    <scope>SUBCELLULAR LOCATION</scope>
    <scope>DISRUPTION PHENOTYPE</scope>
    <source>
        <strain>168</strain>
        <strain>168 / PY79</strain>
    </source>
</reference>
<reference key="6">
    <citation type="journal article" date="2008" name="J. Biomol. NMR">
        <title>Solution structure of the soluble domain of the NfeD protein YuaF from Bacillus subtilis.</title>
        <authorList>
            <person name="Walker C.A."/>
            <person name="Hinderhofer M."/>
            <person name="Witte D.J."/>
            <person name="Boos W."/>
            <person name="Moeller H.M."/>
        </authorList>
    </citation>
    <scope>STRUCTURE BY NMR OF 97-174</scope>
    <source>
        <strain>168 / Marburg / ATCC 6051 / DSM 10 / JCM 1465 / NBRC 13719 / NCIMB 3610 / NRRL NRS-744 / VKM B-501</strain>
    </source>
</reference>
<protein>
    <recommendedName>
        <fullName evidence="6">Membrane protein NfeD2</fullName>
    </recommendedName>
</protein>
<evidence type="ECO:0000255" key="1"/>
<evidence type="ECO:0000269" key="2">
    <source>
    </source>
</evidence>
<evidence type="ECO:0000269" key="3">
    <source>
    </source>
</evidence>
<evidence type="ECO:0000269" key="4">
    <source>
    </source>
</evidence>
<evidence type="ECO:0000269" key="5">
    <source>
    </source>
</evidence>
<evidence type="ECO:0000303" key="6">
    <source>
    </source>
</evidence>
<evidence type="ECO:0000305" key="7"/>
<evidence type="ECO:0000305" key="8">
    <source>
    </source>
</evidence>
<evidence type="ECO:0000305" key="9">
    <source>
    </source>
</evidence>
<evidence type="ECO:0007829" key="10">
    <source>
        <dbReference type="PDB" id="2K14"/>
    </source>
</evidence>
<organism>
    <name type="scientific">Bacillus subtilis (strain 168)</name>
    <dbReference type="NCBI Taxonomy" id="224308"/>
    <lineage>
        <taxon>Bacteria</taxon>
        <taxon>Bacillati</taxon>
        <taxon>Bacillota</taxon>
        <taxon>Bacilli</taxon>
        <taxon>Bacillales</taxon>
        <taxon>Bacillaceae</taxon>
        <taxon>Bacillus</taxon>
    </lineage>
</organism>
<name>NFED2_BACSU</name>
<sequence>MELFGVPIQTMYLYTLIIAGSLTLLFLFFGDVFSGLSEGIPFLNPTLVLSFFTCFSAGGYIGELVLPLSSLLIALLSCILSIMLVVLLHIFVLVPLSSAEESLAYREDDLRGRLGKVITAVPVDGFGEVVIEGIGGTISKSAVSFDNQQISYGTTVLVVDINNGVLSVTPHEPI</sequence>
<feature type="chain" id="PRO_0000379129" description="Membrane protein NfeD2">
    <location>
        <begin position="1"/>
        <end position="174"/>
    </location>
</feature>
<feature type="transmembrane region" description="Helical" evidence="1">
    <location>
        <begin position="16"/>
        <end position="36"/>
    </location>
</feature>
<feature type="transmembrane region" description="Helical" evidence="1">
    <location>
        <begin position="47"/>
        <end position="67"/>
    </location>
</feature>
<feature type="transmembrane region" description="Helical" evidence="1">
    <location>
        <begin position="72"/>
        <end position="92"/>
    </location>
</feature>
<feature type="helix" evidence="10">
    <location>
        <begin position="97"/>
        <end position="109"/>
    </location>
</feature>
<feature type="helix" evidence="10">
    <location>
        <begin position="110"/>
        <end position="112"/>
    </location>
</feature>
<feature type="strand" evidence="10">
    <location>
        <begin position="113"/>
        <end position="119"/>
    </location>
</feature>
<feature type="strand" evidence="10">
    <location>
        <begin position="126"/>
        <end position="132"/>
    </location>
</feature>
<feature type="strand" evidence="10">
    <location>
        <begin position="140"/>
        <end position="144"/>
    </location>
</feature>
<feature type="strand" evidence="10">
    <location>
        <begin position="155"/>
        <end position="162"/>
    </location>
</feature>
<feature type="strand" evidence="10">
    <location>
        <begin position="165"/>
        <end position="169"/>
    </location>
</feature>